<name>SOSSC_DANRE</name>
<evidence type="ECO:0000250" key="1"/>
<evidence type="ECO:0000305" key="2"/>
<organism>
    <name type="scientific">Danio rerio</name>
    <name type="common">Zebrafish</name>
    <name type="synonym">Brachydanio rerio</name>
    <dbReference type="NCBI Taxonomy" id="7955"/>
    <lineage>
        <taxon>Eukaryota</taxon>
        <taxon>Metazoa</taxon>
        <taxon>Chordata</taxon>
        <taxon>Craniata</taxon>
        <taxon>Vertebrata</taxon>
        <taxon>Euteleostomi</taxon>
        <taxon>Actinopterygii</taxon>
        <taxon>Neopterygii</taxon>
        <taxon>Teleostei</taxon>
        <taxon>Ostariophysi</taxon>
        <taxon>Cypriniformes</taxon>
        <taxon>Danionidae</taxon>
        <taxon>Danioninae</taxon>
        <taxon>Danio</taxon>
    </lineage>
</organism>
<gene>
    <name type="primary">inip</name>
    <name type="synonym">ssbip1</name>
    <name type="ORF">zgc:56259</name>
</gene>
<keyword id="KW-0227">DNA damage</keyword>
<keyword id="KW-0234">DNA repair</keyword>
<keyword id="KW-0539">Nucleus</keyword>
<keyword id="KW-1185">Reference proteome</keyword>
<dbReference type="EMBL" id="BC046030">
    <property type="protein sequence ID" value="AAH46030.1"/>
    <property type="molecule type" value="mRNA"/>
</dbReference>
<dbReference type="EMBL" id="BC071348">
    <property type="protein sequence ID" value="AAH71348.1"/>
    <property type="molecule type" value="mRNA"/>
</dbReference>
<dbReference type="RefSeq" id="NP_956513.1">
    <property type="nucleotide sequence ID" value="NM_200219.2"/>
</dbReference>
<dbReference type="SMR" id="Q7ZV26"/>
<dbReference type="FunCoup" id="Q7ZV26">
    <property type="interactions" value="1556"/>
</dbReference>
<dbReference type="STRING" id="7955.ENSDARP00000038879"/>
<dbReference type="PaxDb" id="7955-ENSDARP00000038879"/>
<dbReference type="Ensembl" id="ENSDART00000039145">
    <property type="protein sequence ID" value="ENSDARP00000038879"/>
    <property type="gene ID" value="ENSDARG00000028523"/>
</dbReference>
<dbReference type="GeneID" id="393188"/>
<dbReference type="KEGG" id="dre:393188"/>
<dbReference type="AGR" id="ZFIN:ZDB-GENE-040426-961"/>
<dbReference type="CTD" id="58493"/>
<dbReference type="ZFIN" id="ZDB-GENE-040426-961">
    <property type="gene designation" value="inip"/>
</dbReference>
<dbReference type="eggNOG" id="ENOG502S23S">
    <property type="taxonomic scope" value="Eukaryota"/>
</dbReference>
<dbReference type="HOGENOM" id="CLU_145773_1_0_1"/>
<dbReference type="InParanoid" id="Q7ZV26"/>
<dbReference type="OMA" id="QPLFQTY"/>
<dbReference type="OrthoDB" id="10040290at2759"/>
<dbReference type="PhylomeDB" id="Q7ZV26"/>
<dbReference type="TreeFam" id="TF328613"/>
<dbReference type="PRO" id="PR:Q7ZV26"/>
<dbReference type="Proteomes" id="UP000000437">
    <property type="component" value="Chromosome 10"/>
</dbReference>
<dbReference type="Bgee" id="ENSDARG00000028523">
    <property type="expression patterns" value="Expressed in early embryo and 26 other cell types or tissues"/>
</dbReference>
<dbReference type="GO" id="GO:0005654">
    <property type="term" value="C:nucleoplasm"/>
    <property type="evidence" value="ECO:0000318"/>
    <property type="project" value="GO_Central"/>
</dbReference>
<dbReference type="GO" id="GO:0005634">
    <property type="term" value="C:nucleus"/>
    <property type="evidence" value="ECO:0000250"/>
    <property type="project" value="UniProtKB"/>
</dbReference>
<dbReference type="GO" id="GO:0070876">
    <property type="term" value="C:SOSS complex"/>
    <property type="evidence" value="ECO:0000250"/>
    <property type="project" value="UniProtKB"/>
</dbReference>
<dbReference type="GO" id="GO:0006974">
    <property type="term" value="P:DNA damage response"/>
    <property type="evidence" value="ECO:0000250"/>
    <property type="project" value="UniProtKB"/>
</dbReference>
<dbReference type="GO" id="GO:0006281">
    <property type="term" value="P:DNA repair"/>
    <property type="evidence" value="ECO:0000250"/>
    <property type="project" value="UniProtKB"/>
</dbReference>
<dbReference type="GO" id="GO:0010212">
    <property type="term" value="P:response to ionizing radiation"/>
    <property type="evidence" value="ECO:0000250"/>
    <property type="project" value="UniProtKB"/>
</dbReference>
<dbReference type="InterPro" id="IPR031821">
    <property type="entry name" value="SOSSC"/>
</dbReference>
<dbReference type="PANTHER" id="PTHR31526">
    <property type="entry name" value="SOSS COMPLEX SUBUNIT C"/>
    <property type="match status" value="1"/>
</dbReference>
<dbReference type="PANTHER" id="PTHR31526:SF2">
    <property type="entry name" value="SOSS COMPLEX SUBUNIT C"/>
    <property type="match status" value="1"/>
</dbReference>
<dbReference type="Pfam" id="PF15925">
    <property type="entry name" value="SOSSC"/>
    <property type="match status" value="1"/>
</dbReference>
<proteinExistence type="inferred from homology"/>
<comment type="function">
    <text evidence="1">Component of the SOSS complex, a multiprotein complex that functions downstream of the MRN complex to promote DNA repair and G2/M checkpoint. The SOSS complex associates with single-stranded DNA at DNA lesions and influences diverse endpoints in the cellular DNA damage response including cell-cycle checkpoint activation, recombinational repair and maintenance of genomic stability. Required for efficient homologous recombination-dependent repair of double-strand breaks (DSBs) (By similarity).</text>
</comment>
<comment type="subunit">
    <text evidence="1">Belongs to the multiprotein complex Integrator. Component of the SOSS complex, composed of soss-b (soss-b1/nabp2 or soss-b2/nabp1), soss-a/ints3 and soss-c/inip (By similarity).</text>
</comment>
<comment type="subcellular location">
    <subcellularLocation>
        <location evidence="1">Nucleus</location>
    </subcellularLocation>
    <text evidence="1">Localizes to nuclear foci following DNA damage.</text>
</comment>
<comment type="similarity">
    <text evidence="2">Belongs to the SOSS-C family.</text>
</comment>
<feature type="chain" id="PRO_0000279422" description="SOSS complex subunit C">
    <location>
        <begin position="1"/>
        <end position="103"/>
    </location>
</feature>
<sequence length="103" mass="11345">MAANPPGQGFQNKNRVAILAELDKEKRRLIQSQTLNNPGASIPLSRPAVNKEFRDQAEQQHIAAQQKAALQHAHAHSSGFFITQDSSFGNLILPVLPRLDPLE</sequence>
<reference key="1">
    <citation type="submission" date="2003-01" db="EMBL/GenBank/DDBJ databases">
        <authorList>
            <consortium name="NIH - Zebrafish Gene Collection (ZGC) project"/>
        </authorList>
    </citation>
    <scope>NUCLEOTIDE SEQUENCE [LARGE SCALE MRNA]</scope>
    <source>
        <strain>SJD</strain>
        <tissue>Embryo</tissue>
    </source>
</reference>
<accession>Q7ZV26</accession>
<protein>
    <recommendedName>
        <fullName>SOSS complex subunit C</fullName>
    </recommendedName>
    <alternativeName>
        <fullName>INTS3- and NABP-interacting protein</fullName>
    </alternativeName>
    <alternativeName>
        <fullName>Sensor of single-strand DNA complex subunit C</fullName>
    </alternativeName>
    <alternativeName>
        <fullName>Sensor of ssDNA subunit C</fullName>
        <shortName>SOSS-C</shortName>
    </alternativeName>
    <alternativeName>
        <fullName>Single-stranded DNA-binding protein-interacting protein 1</fullName>
        <shortName>SSB-interacting protein 1</shortName>
    </alternativeName>
</protein>